<sequence>MKVTDVRLRKIQTDGRMKALVSITLDEAFVIHDLRVIEGNSGLFVAMPSKRTPDGEFRDIAHPINSDMRQEIQDAVMKVYDETDEVVPDKNATSEDSEEA</sequence>
<organism>
    <name type="scientific">Staphylococcus aureus (strain MSSA476)</name>
    <dbReference type="NCBI Taxonomy" id="282459"/>
    <lineage>
        <taxon>Bacteria</taxon>
        <taxon>Bacillati</taxon>
        <taxon>Bacillota</taxon>
        <taxon>Bacilli</taxon>
        <taxon>Bacillales</taxon>
        <taxon>Staphylococcaceae</taxon>
        <taxon>Staphylococcus</taxon>
    </lineage>
</organism>
<feature type="chain" id="PRO_0000157207" description="Putative septation protein SpoVG">
    <location>
        <begin position="1"/>
        <end position="100"/>
    </location>
</feature>
<keyword id="KW-0131">Cell cycle</keyword>
<keyword id="KW-0132">Cell division</keyword>
<keyword id="KW-0717">Septation</keyword>
<proteinExistence type="inferred from homology"/>
<evidence type="ECO:0000255" key="1">
    <source>
        <dbReference type="HAMAP-Rule" id="MF_00819"/>
    </source>
</evidence>
<reference key="1">
    <citation type="journal article" date="2004" name="Proc. Natl. Acad. Sci. U.S.A.">
        <title>Complete genomes of two clinical Staphylococcus aureus strains: evidence for the rapid evolution of virulence and drug resistance.</title>
        <authorList>
            <person name="Holden M.T.G."/>
            <person name="Feil E.J."/>
            <person name="Lindsay J.A."/>
            <person name="Peacock S.J."/>
            <person name="Day N.P.J."/>
            <person name="Enright M.C."/>
            <person name="Foster T.J."/>
            <person name="Moore C.E."/>
            <person name="Hurst L."/>
            <person name="Atkin R."/>
            <person name="Barron A."/>
            <person name="Bason N."/>
            <person name="Bentley S.D."/>
            <person name="Chillingworth C."/>
            <person name="Chillingworth T."/>
            <person name="Churcher C."/>
            <person name="Clark L."/>
            <person name="Corton C."/>
            <person name="Cronin A."/>
            <person name="Doggett J."/>
            <person name="Dowd L."/>
            <person name="Feltwell T."/>
            <person name="Hance Z."/>
            <person name="Harris B."/>
            <person name="Hauser H."/>
            <person name="Holroyd S."/>
            <person name="Jagels K."/>
            <person name="James K.D."/>
            <person name="Lennard N."/>
            <person name="Line A."/>
            <person name="Mayes R."/>
            <person name="Moule S."/>
            <person name="Mungall K."/>
            <person name="Ormond D."/>
            <person name="Quail M.A."/>
            <person name="Rabbinowitsch E."/>
            <person name="Rutherford K.M."/>
            <person name="Sanders M."/>
            <person name="Sharp S."/>
            <person name="Simmonds M."/>
            <person name="Stevens K."/>
            <person name="Whitehead S."/>
            <person name="Barrell B.G."/>
            <person name="Spratt B.G."/>
            <person name="Parkhill J."/>
        </authorList>
    </citation>
    <scope>NUCLEOTIDE SEQUENCE [LARGE SCALE GENOMIC DNA]</scope>
    <source>
        <strain>MSSA476</strain>
    </source>
</reference>
<accession>Q6GBZ0</accession>
<protein>
    <recommendedName>
        <fullName evidence="1">Putative septation protein SpoVG</fullName>
    </recommendedName>
</protein>
<gene>
    <name evidence="1" type="primary">spoVG</name>
    <name type="ordered locus">SAS0455</name>
</gene>
<name>SP5G_STAAS</name>
<dbReference type="EMBL" id="BX571857">
    <property type="protein sequence ID" value="CAG42230.1"/>
    <property type="molecule type" value="Genomic_DNA"/>
</dbReference>
<dbReference type="RefSeq" id="WP_000868999.1">
    <property type="nucleotide sequence ID" value="NC_002953.3"/>
</dbReference>
<dbReference type="SMR" id="Q6GBZ0"/>
<dbReference type="KEGG" id="sas:SAS0455"/>
<dbReference type="HOGENOM" id="CLU_103669_2_1_9"/>
<dbReference type="GO" id="GO:0000917">
    <property type="term" value="P:division septum assembly"/>
    <property type="evidence" value="ECO:0007669"/>
    <property type="project" value="UniProtKB-KW"/>
</dbReference>
<dbReference type="GO" id="GO:0030435">
    <property type="term" value="P:sporulation resulting in formation of a cellular spore"/>
    <property type="evidence" value="ECO:0007669"/>
    <property type="project" value="InterPro"/>
</dbReference>
<dbReference type="Gene3D" id="3.30.1120.40">
    <property type="entry name" value="Stage V sporulation protein G"/>
    <property type="match status" value="1"/>
</dbReference>
<dbReference type="HAMAP" id="MF_00819">
    <property type="entry name" value="SpoVG"/>
    <property type="match status" value="1"/>
</dbReference>
<dbReference type="InterPro" id="IPR007170">
    <property type="entry name" value="SpoVG"/>
</dbReference>
<dbReference type="InterPro" id="IPR036751">
    <property type="entry name" value="SpoVG_sf"/>
</dbReference>
<dbReference type="NCBIfam" id="NF009749">
    <property type="entry name" value="PRK13259.1"/>
    <property type="match status" value="1"/>
</dbReference>
<dbReference type="PANTHER" id="PTHR38429">
    <property type="entry name" value="SEPTATION PROTEIN SPOVG-RELATED"/>
    <property type="match status" value="1"/>
</dbReference>
<dbReference type="PANTHER" id="PTHR38429:SF1">
    <property type="entry name" value="SEPTATION PROTEIN SPOVG-RELATED"/>
    <property type="match status" value="1"/>
</dbReference>
<dbReference type="Pfam" id="PF04026">
    <property type="entry name" value="SpoVG"/>
    <property type="match status" value="1"/>
</dbReference>
<dbReference type="SUPFAM" id="SSF160537">
    <property type="entry name" value="SpoVG-like"/>
    <property type="match status" value="1"/>
</dbReference>
<comment type="function">
    <text evidence="1">Could be involved in septation.</text>
</comment>
<comment type="similarity">
    <text evidence="1">Belongs to the SpoVG family.</text>
</comment>